<organism>
    <name type="scientific">Lactobacillus delbrueckii subsp. bulgaricus (strain ATCC 11842 / DSM 20081 / BCRC 10696 / JCM 1002 / NBRC 13953 / NCIMB 11778 / NCTC 12712 / WDCM 00102 / Lb 14)</name>
    <dbReference type="NCBI Taxonomy" id="390333"/>
    <lineage>
        <taxon>Bacteria</taxon>
        <taxon>Bacillati</taxon>
        <taxon>Bacillota</taxon>
        <taxon>Bacilli</taxon>
        <taxon>Lactobacillales</taxon>
        <taxon>Lactobacillaceae</taxon>
        <taxon>Lactobacillus</taxon>
    </lineage>
</organism>
<protein>
    <recommendedName>
        <fullName evidence="1">Phenylalanine--tRNA ligase alpha subunit</fullName>
        <ecNumber evidence="1">6.1.1.20</ecNumber>
    </recommendedName>
    <alternativeName>
        <fullName evidence="1">Phenylalanyl-tRNA synthetase alpha subunit</fullName>
        <shortName evidence="1">PheRS</shortName>
    </alternativeName>
</protein>
<keyword id="KW-0030">Aminoacyl-tRNA synthetase</keyword>
<keyword id="KW-0067">ATP-binding</keyword>
<keyword id="KW-0963">Cytoplasm</keyword>
<keyword id="KW-0436">Ligase</keyword>
<keyword id="KW-0460">Magnesium</keyword>
<keyword id="KW-0479">Metal-binding</keyword>
<keyword id="KW-0547">Nucleotide-binding</keyword>
<keyword id="KW-0648">Protein biosynthesis</keyword>
<keyword id="KW-1185">Reference proteome</keyword>
<proteinExistence type="inferred from homology"/>
<accession>Q1G9C7</accession>
<name>SYFA_LACDA</name>
<dbReference type="EC" id="6.1.1.20" evidence="1"/>
<dbReference type="EMBL" id="CR954253">
    <property type="protein sequence ID" value="CAI98287.1"/>
    <property type="molecule type" value="Genomic_DNA"/>
</dbReference>
<dbReference type="RefSeq" id="WP_003618194.1">
    <property type="nucleotide sequence ID" value="NZ_JQAV01000014.1"/>
</dbReference>
<dbReference type="SMR" id="Q1G9C7"/>
<dbReference type="STRING" id="390333.Ldb1487"/>
<dbReference type="KEGG" id="ldb:Ldb1487"/>
<dbReference type="PATRIC" id="fig|390333.13.peg.705"/>
<dbReference type="eggNOG" id="COG0016">
    <property type="taxonomic scope" value="Bacteria"/>
</dbReference>
<dbReference type="HOGENOM" id="CLU_025086_0_1_9"/>
<dbReference type="BioCyc" id="LDEL390333:LDB_RS06395-MONOMER"/>
<dbReference type="Proteomes" id="UP000001259">
    <property type="component" value="Chromosome"/>
</dbReference>
<dbReference type="GO" id="GO:0005737">
    <property type="term" value="C:cytoplasm"/>
    <property type="evidence" value="ECO:0007669"/>
    <property type="project" value="UniProtKB-SubCell"/>
</dbReference>
<dbReference type="GO" id="GO:0005524">
    <property type="term" value="F:ATP binding"/>
    <property type="evidence" value="ECO:0007669"/>
    <property type="project" value="UniProtKB-UniRule"/>
</dbReference>
<dbReference type="GO" id="GO:0140096">
    <property type="term" value="F:catalytic activity, acting on a protein"/>
    <property type="evidence" value="ECO:0007669"/>
    <property type="project" value="UniProtKB-ARBA"/>
</dbReference>
<dbReference type="GO" id="GO:0000287">
    <property type="term" value="F:magnesium ion binding"/>
    <property type="evidence" value="ECO:0007669"/>
    <property type="project" value="UniProtKB-UniRule"/>
</dbReference>
<dbReference type="GO" id="GO:0004826">
    <property type="term" value="F:phenylalanine-tRNA ligase activity"/>
    <property type="evidence" value="ECO:0007669"/>
    <property type="project" value="UniProtKB-UniRule"/>
</dbReference>
<dbReference type="GO" id="GO:0016740">
    <property type="term" value="F:transferase activity"/>
    <property type="evidence" value="ECO:0007669"/>
    <property type="project" value="UniProtKB-ARBA"/>
</dbReference>
<dbReference type="GO" id="GO:0000049">
    <property type="term" value="F:tRNA binding"/>
    <property type="evidence" value="ECO:0007669"/>
    <property type="project" value="InterPro"/>
</dbReference>
<dbReference type="GO" id="GO:0006432">
    <property type="term" value="P:phenylalanyl-tRNA aminoacylation"/>
    <property type="evidence" value="ECO:0007669"/>
    <property type="project" value="UniProtKB-UniRule"/>
</dbReference>
<dbReference type="CDD" id="cd00496">
    <property type="entry name" value="PheRS_alpha_core"/>
    <property type="match status" value="1"/>
</dbReference>
<dbReference type="FunFam" id="3.30.930.10:FF:000003">
    <property type="entry name" value="Phenylalanine--tRNA ligase alpha subunit"/>
    <property type="match status" value="1"/>
</dbReference>
<dbReference type="Gene3D" id="3.30.930.10">
    <property type="entry name" value="Bira Bifunctional Protein, Domain 2"/>
    <property type="match status" value="1"/>
</dbReference>
<dbReference type="HAMAP" id="MF_00281">
    <property type="entry name" value="Phe_tRNA_synth_alpha1"/>
    <property type="match status" value="1"/>
</dbReference>
<dbReference type="InterPro" id="IPR006195">
    <property type="entry name" value="aa-tRNA-synth_II"/>
</dbReference>
<dbReference type="InterPro" id="IPR045864">
    <property type="entry name" value="aa-tRNA-synth_II/BPL/LPL"/>
</dbReference>
<dbReference type="InterPro" id="IPR004529">
    <property type="entry name" value="Phe-tRNA-synth_IIc_asu"/>
</dbReference>
<dbReference type="InterPro" id="IPR004188">
    <property type="entry name" value="Phe-tRNA_ligase_II_N"/>
</dbReference>
<dbReference type="InterPro" id="IPR022911">
    <property type="entry name" value="Phe_tRNA_ligase_alpha1_bac"/>
</dbReference>
<dbReference type="InterPro" id="IPR002319">
    <property type="entry name" value="Phenylalanyl-tRNA_Synthase"/>
</dbReference>
<dbReference type="InterPro" id="IPR010978">
    <property type="entry name" value="tRNA-bd_arm"/>
</dbReference>
<dbReference type="NCBIfam" id="TIGR00468">
    <property type="entry name" value="pheS"/>
    <property type="match status" value="1"/>
</dbReference>
<dbReference type="PANTHER" id="PTHR11538:SF41">
    <property type="entry name" value="PHENYLALANINE--TRNA LIGASE, MITOCHONDRIAL"/>
    <property type="match status" value="1"/>
</dbReference>
<dbReference type="PANTHER" id="PTHR11538">
    <property type="entry name" value="PHENYLALANYL-TRNA SYNTHETASE"/>
    <property type="match status" value="1"/>
</dbReference>
<dbReference type="Pfam" id="PF02912">
    <property type="entry name" value="Phe_tRNA-synt_N"/>
    <property type="match status" value="1"/>
</dbReference>
<dbReference type="Pfam" id="PF01409">
    <property type="entry name" value="tRNA-synt_2d"/>
    <property type="match status" value="1"/>
</dbReference>
<dbReference type="SUPFAM" id="SSF55681">
    <property type="entry name" value="Class II aaRS and biotin synthetases"/>
    <property type="match status" value="1"/>
</dbReference>
<dbReference type="SUPFAM" id="SSF46589">
    <property type="entry name" value="tRNA-binding arm"/>
    <property type="match status" value="1"/>
</dbReference>
<dbReference type="PROSITE" id="PS50862">
    <property type="entry name" value="AA_TRNA_LIGASE_II"/>
    <property type="match status" value="1"/>
</dbReference>
<sequence length="349" mass="39747">MDLFDRLKELREQGLAEIKEAESEKSLNDVRVKLVGKKGELTQILHQMKDVAPEKRREVGQKVNELRDLFNENLASAKDNLIEKAIEARLEAEKIDVTLPGRRKHVGSKHPIRIIQDDLERFFIGMGYQVVQGPEIESEHYNFEMLNLPKDHPARDMQATFYVDADHLLRSQTSPVQARTMEKHDFDKGDLKMISPGKVYRRDDDDATHSHQFMQMEGLVVGKNISLSDLKGTLELVAKHEFGQDRETRLRPSYFPFTEPSVEMDVSCFECGGKGCAICKNTGWIEVLGAGIVHPNVLSAAGIDPSVYSGFAFGLGLDRFAILKYGIDDIRDFYSDDVRFLQQFRQEED</sequence>
<feature type="chain" id="PRO_1000006848" description="Phenylalanine--tRNA ligase alpha subunit">
    <location>
        <begin position="1"/>
        <end position="349"/>
    </location>
</feature>
<feature type="binding site" evidence="1">
    <location>
        <position position="259"/>
    </location>
    <ligand>
        <name>Mg(2+)</name>
        <dbReference type="ChEBI" id="CHEBI:18420"/>
        <note>shared with beta subunit</note>
    </ligand>
</feature>
<comment type="catalytic activity">
    <reaction evidence="1">
        <text>tRNA(Phe) + L-phenylalanine + ATP = L-phenylalanyl-tRNA(Phe) + AMP + diphosphate + H(+)</text>
        <dbReference type="Rhea" id="RHEA:19413"/>
        <dbReference type="Rhea" id="RHEA-COMP:9668"/>
        <dbReference type="Rhea" id="RHEA-COMP:9699"/>
        <dbReference type="ChEBI" id="CHEBI:15378"/>
        <dbReference type="ChEBI" id="CHEBI:30616"/>
        <dbReference type="ChEBI" id="CHEBI:33019"/>
        <dbReference type="ChEBI" id="CHEBI:58095"/>
        <dbReference type="ChEBI" id="CHEBI:78442"/>
        <dbReference type="ChEBI" id="CHEBI:78531"/>
        <dbReference type="ChEBI" id="CHEBI:456215"/>
        <dbReference type="EC" id="6.1.1.20"/>
    </reaction>
</comment>
<comment type="cofactor">
    <cofactor evidence="1">
        <name>Mg(2+)</name>
        <dbReference type="ChEBI" id="CHEBI:18420"/>
    </cofactor>
    <text evidence="1">Binds 2 magnesium ions per tetramer.</text>
</comment>
<comment type="subunit">
    <text evidence="1">Tetramer of two alpha and two beta subunits.</text>
</comment>
<comment type="subcellular location">
    <subcellularLocation>
        <location evidence="1">Cytoplasm</location>
    </subcellularLocation>
</comment>
<comment type="similarity">
    <text evidence="1">Belongs to the class-II aminoacyl-tRNA synthetase family. Phe-tRNA synthetase alpha subunit type 1 subfamily.</text>
</comment>
<evidence type="ECO:0000255" key="1">
    <source>
        <dbReference type="HAMAP-Rule" id="MF_00281"/>
    </source>
</evidence>
<gene>
    <name evidence="1" type="primary">pheS</name>
    <name type="ordered locus">Ldb1487</name>
</gene>
<reference key="1">
    <citation type="journal article" date="2006" name="Proc. Natl. Acad. Sci. U.S.A.">
        <title>The complete genome sequence of Lactobacillus bulgaricus reveals extensive and ongoing reductive evolution.</title>
        <authorList>
            <person name="van de Guchte M."/>
            <person name="Penaud S."/>
            <person name="Grimaldi C."/>
            <person name="Barbe V."/>
            <person name="Bryson K."/>
            <person name="Nicolas P."/>
            <person name="Robert C."/>
            <person name="Oztas S."/>
            <person name="Mangenot S."/>
            <person name="Couloux A."/>
            <person name="Loux V."/>
            <person name="Dervyn R."/>
            <person name="Bossy R."/>
            <person name="Bolotin A."/>
            <person name="Batto J.-M."/>
            <person name="Walunas T."/>
            <person name="Gibrat J.-F."/>
            <person name="Bessieres P."/>
            <person name="Weissenbach J."/>
            <person name="Ehrlich S.D."/>
            <person name="Maguin E."/>
        </authorList>
    </citation>
    <scope>NUCLEOTIDE SEQUENCE [LARGE SCALE GENOMIC DNA]</scope>
    <source>
        <strain>ATCC 11842 / DSM 20081 / BCRC 10696 / JCM 1002 / NBRC 13953 / NCIMB 11778 / NCTC 12712 / WDCM 00102 / Lb 14</strain>
    </source>
</reference>